<evidence type="ECO:0000255" key="1">
    <source>
        <dbReference type="HAMAP-Rule" id="MF_00258"/>
    </source>
</evidence>
<sequence>MAVGVFDSGLGGLTVLDAVSRRLPEVPFVYYGDNLHAPYGVRDAEDVYELTTGAVSRLWDEGCDLVILACNTASAAALRRMQESWVPSDKRVLGVFVPLIEALTERQWGDNSPPREVAIKHVALFATPATVSSRAFQRELAFRAIGVDVEAQPCGGVVDAIEDGDMILAEALVRSHVEALKRRMPHPEAAILGCTHYPLMQDVFQDALGADVKVYSQAQLVAESLADYLTRHPDMLGLGAEPGFLTTGDPKSVSNKATQFLRRKIEFRAVEPL</sequence>
<reference key="1">
    <citation type="journal article" date="2010" name="ISME J.">
        <title>The complete genome sequence of the algal symbiont Dinoroseobacter shibae: a hitchhiker's guide to life in the sea.</title>
        <authorList>
            <person name="Wagner-Dobler I."/>
            <person name="Ballhausen B."/>
            <person name="Berger M."/>
            <person name="Brinkhoff T."/>
            <person name="Buchholz I."/>
            <person name="Bunk B."/>
            <person name="Cypionka H."/>
            <person name="Daniel R."/>
            <person name="Drepper T."/>
            <person name="Gerdts G."/>
            <person name="Hahnke S."/>
            <person name="Han C."/>
            <person name="Jahn D."/>
            <person name="Kalhoefer D."/>
            <person name="Kiss H."/>
            <person name="Klenk H.P."/>
            <person name="Kyrpides N."/>
            <person name="Liebl W."/>
            <person name="Liesegang H."/>
            <person name="Meincke L."/>
            <person name="Pati A."/>
            <person name="Petersen J."/>
            <person name="Piekarski T."/>
            <person name="Pommerenke C."/>
            <person name="Pradella S."/>
            <person name="Pukall R."/>
            <person name="Rabus R."/>
            <person name="Stackebrandt E."/>
            <person name="Thole S."/>
            <person name="Thompson L."/>
            <person name="Tielen P."/>
            <person name="Tomasch J."/>
            <person name="von Jan M."/>
            <person name="Wanphrut N."/>
            <person name="Wichels A."/>
            <person name="Zech H."/>
            <person name="Simon M."/>
        </authorList>
    </citation>
    <scope>NUCLEOTIDE SEQUENCE [LARGE SCALE GENOMIC DNA]</scope>
    <source>
        <strain>DSM 16493 / NCIMB 14021 / DFL 12</strain>
    </source>
</reference>
<gene>
    <name evidence="1" type="primary">murI</name>
    <name type="ordered locus">Dshi_1760</name>
</gene>
<proteinExistence type="inferred from homology"/>
<protein>
    <recommendedName>
        <fullName evidence="1">Glutamate racemase</fullName>
        <ecNumber evidence="1">5.1.1.3</ecNumber>
    </recommendedName>
</protein>
<comment type="function">
    <text evidence="1">Provides the (R)-glutamate required for cell wall biosynthesis.</text>
</comment>
<comment type="catalytic activity">
    <reaction evidence="1">
        <text>L-glutamate = D-glutamate</text>
        <dbReference type="Rhea" id="RHEA:12813"/>
        <dbReference type="ChEBI" id="CHEBI:29985"/>
        <dbReference type="ChEBI" id="CHEBI:29986"/>
        <dbReference type="EC" id="5.1.1.3"/>
    </reaction>
</comment>
<comment type="pathway">
    <text evidence="1">Cell wall biogenesis; peptidoglycan biosynthesis.</text>
</comment>
<comment type="similarity">
    <text evidence="1">Belongs to the aspartate/glutamate racemases family.</text>
</comment>
<name>MURI_DINSH</name>
<dbReference type="EC" id="5.1.1.3" evidence="1"/>
<dbReference type="EMBL" id="CP000830">
    <property type="protein sequence ID" value="ABV93502.1"/>
    <property type="molecule type" value="Genomic_DNA"/>
</dbReference>
<dbReference type="RefSeq" id="WP_012178432.1">
    <property type="nucleotide sequence ID" value="NC_009952.1"/>
</dbReference>
<dbReference type="SMR" id="A8LMF7"/>
<dbReference type="STRING" id="398580.Dshi_1760"/>
<dbReference type="KEGG" id="dsh:Dshi_1760"/>
<dbReference type="eggNOG" id="COG0796">
    <property type="taxonomic scope" value="Bacteria"/>
</dbReference>
<dbReference type="HOGENOM" id="CLU_052344_0_3_5"/>
<dbReference type="OrthoDB" id="9801055at2"/>
<dbReference type="UniPathway" id="UPA00219"/>
<dbReference type="Proteomes" id="UP000006833">
    <property type="component" value="Chromosome"/>
</dbReference>
<dbReference type="GO" id="GO:0008881">
    <property type="term" value="F:glutamate racemase activity"/>
    <property type="evidence" value="ECO:0007669"/>
    <property type="project" value="UniProtKB-UniRule"/>
</dbReference>
<dbReference type="GO" id="GO:0071555">
    <property type="term" value="P:cell wall organization"/>
    <property type="evidence" value="ECO:0007669"/>
    <property type="project" value="UniProtKB-KW"/>
</dbReference>
<dbReference type="GO" id="GO:0009252">
    <property type="term" value="P:peptidoglycan biosynthetic process"/>
    <property type="evidence" value="ECO:0007669"/>
    <property type="project" value="UniProtKB-UniRule"/>
</dbReference>
<dbReference type="GO" id="GO:0008360">
    <property type="term" value="P:regulation of cell shape"/>
    <property type="evidence" value="ECO:0007669"/>
    <property type="project" value="UniProtKB-KW"/>
</dbReference>
<dbReference type="Gene3D" id="3.40.50.1860">
    <property type="match status" value="2"/>
</dbReference>
<dbReference type="HAMAP" id="MF_00258">
    <property type="entry name" value="Glu_racemase"/>
    <property type="match status" value="1"/>
</dbReference>
<dbReference type="InterPro" id="IPR015942">
    <property type="entry name" value="Asp/Glu/hydantoin_racemase"/>
</dbReference>
<dbReference type="InterPro" id="IPR001920">
    <property type="entry name" value="Asp/Glu_race"/>
</dbReference>
<dbReference type="InterPro" id="IPR018187">
    <property type="entry name" value="Asp/Glu_racemase_AS_1"/>
</dbReference>
<dbReference type="InterPro" id="IPR004391">
    <property type="entry name" value="Glu_race"/>
</dbReference>
<dbReference type="PANTHER" id="PTHR21198">
    <property type="entry name" value="GLUTAMATE RACEMASE"/>
    <property type="match status" value="1"/>
</dbReference>
<dbReference type="PANTHER" id="PTHR21198:SF2">
    <property type="entry name" value="GLUTAMATE RACEMASE"/>
    <property type="match status" value="1"/>
</dbReference>
<dbReference type="Pfam" id="PF01177">
    <property type="entry name" value="Asp_Glu_race"/>
    <property type="match status" value="1"/>
</dbReference>
<dbReference type="SUPFAM" id="SSF53681">
    <property type="entry name" value="Aspartate/glutamate racemase"/>
    <property type="match status" value="2"/>
</dbReference>
<dbReference type="PROSITE" id="PS00923">
    <property type="entry name" value="ASP_GLU_RACEMASE_1"/>
    <property type="match status" value="1"/>
</dbReference>
<keyword id="KW-0133">Cell shape</keyword>
<keyword id="KW-0961">Cell wall biogenesis/degradation</keyword>
<keyword id="KW-0413">Isomerase</keyword>
<keyword id="KW-0573">Peptidoglycan synthesis</keyword>
<keyword id="KW-1185">Reference proteome</keyword>
<accession>A8LMF7</accession>
<organism>
    <name type="scientific">Dinoroseobacter shibae (strain DSM 16493 / NCIMB 14021 / DFL 12)</name>
    <dbReference type="NCBI Taxonomy" id="398580"/>
    <lineage>
        <taxon>Bacteria</taxon>
        <taxon>Pseudomonadati</taxon>
        <taxon>Pseudomonadota</taxon>
        <taxon>Alphaproteobacteria</taxon>
        <taxon>Rhodobacterales</taxon>
        <taxon>Roseobacteraceae</taxon>
        <taxon>Dinoroseobacter</taxon>
    </lineage>
</organism>
<feature type="chain" id="PRO_1000078558" description="Glutamate racemase">
    <location>
        <begin position="1"/>
        <end position="273"/>
    </location>
</feature>
<feature type="active site" description="Proton donor/acceptor" evidence="1">
    <location>
        <position position="70"/>
    </location>
</feature>
<feature type="active site" description="Proton donor/acceptor" evidence="1">
    <location>
        <position position="194"/>
    </location>
</feature>
<feature type="binding site" evidence="1">
    <location>
        <begin position="7"/>
        <end position="8"/>
    </location>
    <ligand>
        <name>substrate</name>
    </ligand>
</feature>
<feature type="binding site" evidence="1">
    <location>
        <begin position="39"/>
        <end position="40"/>
    </location>
    <ligand>
        <name>substrate</name>
    </ligand>
</feature>
<feature type="binding site" evidence="1">
    <location>
        <begin position="71"/>
        <end position="72"/>
    </location>
    <ligand>
        <name>substrate</name>
    </ligand>
</feature>
<feature type="binding site" evidence="1">
    <location>
        <begin position="195"/>
        <end position="196"/>
    </location>
    <ligand>
        <name>substrate</name>
    </ligand>
</feature>